<organism>
    <name type="scientific">Bacillus cereus (strain AH820)</name>
    <dbReference type="NCBI Taxonomy" id="405535"/>
    <lineage>
        <taxon>Bacteria</taxon>
        <taxon>Bacillati</taxon>
        <taxon>Bacillota</taxon>
        <taxon>Bacilli</taxon>
        <taxon>Bacillales</taxon>
        <taxon>Bacillaceae</taxon>
        <taxon>Bacillus</taxon>
        <taxon>Bacillus cereus group</taxon>
    </lineage>
</organism>
<proteinExistence type="inferred from homology"/>
<evidence type="ECO:0000255" key="1">
    <source>
        <dbReference type="HAMAP-Rule" id="MF_00110"/>
    </source>
</evidence>
<comment type="function">
    <text evidence="1">Catalyzes the conversion of 3-deoxy-D-arabino-heptulosonate 7-phosphate (DAHP) to dehydroquinate (DHQ).</text>
</comment>
<comment type="catalytic activity">
    <reaction evidence="1">
        <text>7-phospho-2-dehydro-3-deoxy-D-arabino-heptonate = 3-dehydroquinate + phosphate</text>
        <dbReference type="Rhea" id="RHEA:21968"/>
        <dbReference type="ChEBI" id="CHEBI:32364"/>
        <dbReference type="ChEBI" id="CHEBI:43474"/>
        <dbReference type="ChEBI" id="CHEBI:58394"/>
        <dbReference type="EC" id="4.2.3.4"/>
    </reaction>
</comment>
<comment type="cofactor">
    <cofactor evidence="1">
        <name>Co(2+)</name>
        <dbReference type="ChEBI" id="CHEBI:48828"/>
    </cofactor>
    <cofactor evidence="1">
        <name>Zn(2+)</name>
        <dbReference type="ChEBI" id="CHEBI:29105"/>
    </cofactor>
    <text evidence="1">Binds 1 divalent metal cation per subunit. Can use either Co(2+) or Zn(2+).</text>
</comment>
<comment type="cofactor">
    <cofactor evidence="1">
        <name>NAD(+)</name>
        <dbReference type="ChEBI" id="CHEBI:57540"/>
    </cofactor>
</comment>
<comment type="pathway">
    <text evidence="1">Metabolic intermediate biosynthesis; chorismate biosynthesis; chorismate from D-erythrose 4-phosphate and phosphoenolpyruvate: step 2/7.</text>
</comment>
<comment type="subcellular location">
    <subcellularLocation>
        <location evidence="1">Cytoplasm</location>
    </subcellularLocation>
</comment>
<comment type="similarity">
    <text evidence="1">Belongs to the sugar phosphate cyclases superfamily. Dehydroquinate synthase family.</text>
</comment>
<accession>B7JH02</accession>
<reference key="1">
    <citation type="submission" date="2008-10" db="EMBL/GenBank/DDBJ databases">
        <title>Genome sequence of Bacillus cereus AH820.</title>
        <authorList>
            <person name="Dodson R.J."/>
            <person name="Durkin A.S."/>
            <person name="Rosovitz M.J."/>
            <person name="Rasko D.A."/>
            <person name="Hoffmaster A."/>
            <person name="Ravel J."/>
            <person name="Sutton G."/>
        </authorList>
    </citation>
    <scope>NUCLEOTIDE SEQUENCE [LARGE SCALE GENOMIC DNA]</scope>
    <source>
        <strain>AH820</strain>
    </source>
</reference>
<protein>
    <recommendedName>
        <fullName evidence="1">3-dehydroquinate synthase</fullName>
        <shortName evidence="1">DHQS</shortName>
        <ecNumber evidence="1">4.2.3.4</ecNumber>
    </recommendedName>
</protein>
<sequence>MGNIHIQTKSKEYDVYVGKESLSHLTTIVQNMQPSVSNIMIISDEAVASLHLQTVVDALQIDQKVFSFVVPSGEKEKSFENFYAAHTSALENKLDRNSLIVALGGGMIGDLAGFVAASFMRGIRFVQVPTTLLAHDSAVGGKVAINHPLGKNMIGAFHQPEAVVYHTPFLQSLPEKEWRSGYAEVIKHALIGDVKLYHWLKEEVQTLADLRDEKLIHILTKAIPVKANIVAQDETEKGVRAHLNFGHTLGHALEKELGYGNITHGDGVAVGMLFAIFLSEQVYKVNLAYEEMKQWFLKYGYPKMPSDLSVERLVGLMKQDKKANAGTIHMVLMQEYGVVNVVSISDETVHIALEAFQKDMV</sequence>
<keyword id="KW-0028">Amino-acid biosynthesis</keyword>
<keyword id="KW-0057">Aromatic amino acid biosynthesis</keyword>
<keyword id="KW-0170">Cobalt</keyword>
<keyword id="KW-0963">Cytoplasm</keyword>
<keyword id="KW-0456">Lyase</keyword>
<keyword id="KW-0479">Metal-binding</keyword>
<keyword id="KW-0520">NAD</keyword>
<keyword id="KW-0547">Nucleotide-binding</keyword>
<keyword id="KW-0862">Zinc</keyword>
<gene>
    <name evidence="1" type="primary">aroB</name>
    <name type="ordered locus">BCAH820_1611</name>
</gene>
<feature type="chain" id="PRO_1000117471" description="3-dehydroquinate synthase">
    <location>
        <begin position="1"/>
        <end position="361"/>
    </location>
</feature>
<feature type="binding site" evidence="1">
    <location>
        <begin position="72"/>
        <end position="77"/>
    </location>
    <ligand>
        <name>NAD(+)</name>
        <dbReference type="ChEBI" id="CHEBI:57540"/>
    </ligand>
</feature>
<feature type="binding site" evidence="1">
    <location>
        <begin position="130"/>
        <end position="131"/>
    </location>
    <ligand>
        <name>NAD(+)</name>
        <dbReference type="ChEBI" id="CHEBI:57540"/>
    </ligand>
</feature>
<feature type="binding site" evidence="1">
    <location>
        <position position="142"/>
    </location>
    <ligand>
        <name>NAD(+)</name>
        <dbReference type="ChEBI" id="CHEBI:57540"/>
    </ligand>
</feature>
<feature type="binding site" evidence="1">
    <location>
        <position position="151"/>
    </location>
    <ligand>
        <name>NAD(+)</name>
        <dbReference type="ChEBI" id="CHEBI:57540"/>
    </ligand>
</feature>
<feature type="binding site" evidence="1">
    <location>
        <position position="184"/>
    </location>
    <ligand>
        <name>Zn(2+)</name>
        <dbReference type="ChEBI" id="CHEBI:29105"/>
    </ligand>
</feature>
<feature type="binding site" evidence="1">
    <location>
        <position position="247"/>
    </location>
    <ligand>
        <name>Zn(2+)</name>
        <dbReference type="ChEBI" id="CHEBI:29105"/>
    </ligand>
</feature>
<feature type="binding site" evidence="1">
    <location>
        <position position="264"/>
    </location>
    <ligand>
        <name>Zn(2+)</name>
        <dbReference type="ChEBI" id="CHEBI:29105"/>
    </ligand>
</feature>
<dbReference type="EC" id="4.2.3.4" evidence="1"/>
<dbReference type="EMBL" id="CP001283">
    <property type="protein sequence ID" value="ACK87240.1"/>
    <property type="molecule type" value="Genomic_DNA"/>
</dbReference>
<dbReference type="RefSeq" id="WP_000526834.1">
    <property type="nucleotide sequence ID" value="NC_011773.1"/>
</dbReference>
<dbReference type="SMR" id="B7JH02"/>
<dbReference type="KEGG" id="bcu:BCAH820_1611"/>
<dbReference type="HOGENOM" id="CLU_001201_0_2_9"/>
<dbReference type="UniPathway" id="UPA00053">
    <property type="reaction ID" value="UER00085"/>
</dbReference>
<dbReference type="Proteomes" id="UP000001363">
    <property type="component" value="Chromosome"/>
</dbReference>
<dbReference type="GO" id="GO:0005737">
    <property type="term" value="C:cytoplasm"/>
    <property type="evidence" value="ECO:0007669"/>
    <property type="project" value="UniProtKB-SubCell"/>
</dbReference>
<dbReference type="GO" id="GO:0003856">
    <property type="term" value="F:3-dehydroquinate synthase activity"/>
    <property type="evidence" value="ECO:0007669"/>
    <property type="project" value="UniProtKB-UniRule"/>
</dbReference>
<dbReference type="GO" id="GO:0046872">
    <property type="term" value="F:metal ion binding"/>
    <property type="evidence" value="ECO:0007669"/>
    <property type="project" value="UniProtKB-KW"/>
</dbReference>
<dbReference type="GO" id="GO:0000166">
    <property type="term" value="F:nucleotide binding"/>
    <property type="evidence" value="ECO:0007669"/>
    <property type="project" value="UniProtKB-KW"/>
</dbReference>
<dbReference type="GO" id="GO:0008652">
    <property type="term" value="P:amino acid biosynthetic process"/>
    <property type="evidence" value="ECO:0007669"/>
    <property type="project" value="UniProtKB-KW"/>
</dbReference>
<dbReference type="GO" id="GO:0009073">
    <property type="term" value="P:aromatic amino acid family biosynthetic process"/>
    <property type="evidence" value="ECO:0007669"/>
    <property type="project" value="UniProtKB-KW"/>
</dbReference>
<dbReference type="GO" id="GO:0009423">
    <property type="term" value="P:chorismate biosynthetic process"/>
    <property type="evidence" value="ECO:0007669"/>
    <property type="project" value="UniProtKB-UniRule"/>
</dbReference>
<dbReference type="CDD" id="cd08195">
    <property type="entry name" value="DHQS"/>
    <property type="match status" value="1"/>
</dbReference>
<dbReference type="FunFam" id="1.20.1090.10:FF:000008">
    <property type="entry name" value="3-dehydroquinate synthase"/>
    <property type="match status" value="1"/>
</dbReference>
<dbReference type="FunFam" id="3.40.50.1970:FF:000001">
    <property type="entry name" value="3-dehydroquinate synthase"/>
    <property type="match status" value="1"/>
</dbReference>
<dbReference type="Gene3D" id="3.40.50.1970">
    <property type="match status" value="1"/>
</dbReference>
<dbReference type="Gene3D" id="1.20.1090.10">
    <property type="entry name" value="Dehydroquinate synthase-like - alpha domain"/>
    <property type="match status" value="1"/>
</dbReference>
<dbReference type="HAMAP" id="MF_00110">
    <property type="entry name" value="DHQ_synthase"/>
    <property type="match status" value="1"/>
</dbReference>
<dbReference type="InterPro" id="IPR050071">
    <property type="entry name" value="Dehydroquinate_synthase"/>
</dbReference>
<dbReference type="InterPro" id="IPR016037">
    <property type="entry name" value="DHQ_synth_AroB"/>
</dbReference>
<dbReference type="InterPro" id="IPR030963">
    <property type="entry name" value="DHQ_synth_fam"/>
</dbReference>
<dbReference type="InterPro" id="IPR030960">
    <property type="entry name" value="DHQS/DOIS_N"/>
</dbReference>
<dbReference type="InterPro" id="IPR056179">
    <property type="entry name" value="DHQS_C"/>
</dbReference>
<dbReference type="NCBIfam" id="TIGR01357">
    <property type="entry name" value="aroB"/>
    <property type="match status" value="1"/>
</dbReference>
<dbReference type="PANTHER" id="PTHR43622">
    <property type="entry name" value="3-DEHYDROQUINATE SYNTHASE"/>
    <property type="match status" value="1"/>
</dbReference>
<dbReference type="PANTHER" id="PTHR43622:SF7">
    <property type="entry name" value="3-DEHYDROQUINATE SYNTHASE, CHLOROPLASTIC"/>
    <property type="match status" value="1"/>
</dbReference>
<dbReference type="Pfam" id="PF01761">
    <property type="entry name" value="DHQ_synthase"/>
    <property type="match status" value="1"/>
</dbReference>
<dbReference type="Pfam" id="PF24621">
    <property type="entry name" value="DHQS_C"/>
    <property type="match status" value="1"/>
</dbReference>
<dbReference type="PIRSF" id="PIRSF001455">
    <property type="entry name" value="DHQ_synth"/>
    <property type="match status" value="1"/>
</dbReference>
<dbReference type="SUPFAM" id="SSF56796">
    <property type="entry name" value="Dehydroquinate synthase-like"/>
    <property type="match status" value="1"/>
</dbReference>
<name>AROB_BACC0</name>